<organism>
    <name type="scientific">Gallus gallus</name>
    <name type="common">Chicken</name>
    <dbReference type="NCBI Taxonomy" id="9031"/>
    <lineage>
        <taxon>Eukaryota</taxon>
        <taxon>Metazoa</taxon>
        <taxon>Chordata</taxon>
        <taxon>Craniata</taxon>
        <taxon>Vertebrata</taxon>
        <taxon>Euteleostomi</taxon>
        <taxon>Archelosauria</taxon>
        <taxon>Archosauria</taxon>
        <taxon>Dinosauria</taxon>
        <taxon>Saurischia</taxon>
        <taxon>Theropoda</taxon>
        <taxon>Coelurosauria</taxon>
        <taxon>Aves</taxon>
        <taxon>Neognathae</taxon>
        <taxon>Galloanserae</taxon>
        <taxon>Galliformes</taxon>
        <taxon>Phasianidae</taxon>
        <taxon>Phasianinae</taxon>
        <taxon>Gallus</taxon>
    </lineage>
</organism>
<proteinExistence type="evidence at transcript level"/>
<accession>Q5ZKU8</accession>
<name>PK1IP_CHICK</name>
<gene>
    <name type="primary">PAK1IP1</name>
    <name type="ORF">RCJMB04_9b18</name>
</gene>
<keyword id="KW-0539">Nucleus</keyword>
<keyword id="KW-1185">Reference proteome</keyword>
<keyword id="KW-0677">Repeat</keyword>
<keyword id="KW-0690">Ribosome biogenesis</keyword>
<keyword id="KW-0734">Signal transduction inhibitor</keyword>
<keyword id="KW-0853">WD repeat</keyword>
<protein>
    <recommendedName>
        <fullName>p21-activated protein kinase-interacting protein 1-like</fullName>
    </recommendedName>
    <alternativeName>
        <fullName>PAK1-interacting protein 1-like</fullName>
    </alternativeName>
</protein>
<sequence length="369" mass="41232">MELVAGCYEQILFGFAARPGEPWTVTPDFTHHAHTASLSAVAVNSKYVVTGSRDESIQIYDMRKKVEHGALLQHNGTITCLEFYGTAHLLSGAEDGLICIWNTKRWECLKSIKAHKGHVTSLSIHPSGKLALSVGTDKTLRTWNLVEGRSAFIKNLKQNAHIIKWSPDGEKYVTVITNKVDIYKLDTASITGTITIEKRISSIRFITDSVLAIAGDDEIIRFYSCDSQKCLCEFKARENRIKDIYSFEREGQHVIVTASSDGYIKVWNLDLNKINNVPSLLCEVSTKARLTCLAVWLDQASEMKENCGKAATSTEANESEKPSAVKKKKVCGMNKSGKLTKQRRRIVPAKRKLEAPLQKKKKKKQNSSE</sequence>
<feature type="chain" id="PRO_0000051127" description="p21-activated protein kinase-interacting protein 1-like">
    <location>
        <begin position="1"/>
        <end position="369"/>
    </location>
</feature>
<feature type="repeat" description="WD 1">
    <location>
        <begin position="33"/>
        <end position="70"/>
    </location>
</feature>
<feature type="repeat" description="WD 2">
    <location>
        <begin position="73"/>
        <end position="111"/>
    </location>
</feature>
<feature type="repeat" description="WD 3">
    <location>
        <begin position="114"/>
        <end position="153"/>
    </location>
</feature>
<feature type="repeat" description="WD 4">
    <location>
        <begin position="195"/>
        <end position="233"/>
    </location>
</feature>
<feature type="repeat" description="WD 5">
    <location>
        <begin position="236"/>
        <end position="278"/>
    </location>
</feature>
<feature type="region of interest" description="Disordered" evidence="2">
    <location>
        <begin position="311"/>
        <end position="369"/>
    </location>
</feature>
<feature type="compositionally biased region" description="Basic residues" evidence="2">
    <location>
        <begin position="338"/>
        <end position="350"/>
    </location>
</feature>
<feature type="compositionally biased region" description="Basic residues" evidence="2">
    <location>
        <begin position="358"/>
        <end position="369"/>
    </location>
</feature>
<comment type="function">
    <text evidence="1">Negatively regulates the PAK1 kinase. PAK1 is a member of the PAK kinase family, which has been shown to play a positive role in the regulation of signaling pathways involving MAPK8 and RELA. PAK1 exists as an inactive homodimer, which is activated by binding of small GTPases such as CDC42 to an N-terminal regulatory domain. PAK1IP1 also binds to the N-terminus of PAK1, and inhibits the specific activation of PAK1 by CDC42. May be involved in ribosomal large subunit assembly.</text>
</comment>
<comment type="subcellular location">
    <subcellularLocation>
        <location evidence="1">Nucleus</location>
        <location evidence="1">Nucleolus</location>
    </subcellularLocation>
</comment>
<reference key="1">
    <citation type="journal article" date="2005" name="Genome Biol.">
        <title>Full-length cDNAs from chicken bursal lymphocytes to facilitate gene function analysis.</title>
        <authorList>
            <person name="Caldwell R.B."/>
            <person name="Kierzek A.M."/>
            <person name="Arakawa H."/>
            <person name="Bezzubov Y."/>
            <person name="Zaim J."/>
            <person name="Fiedler P."/>
            <person name="Kutter S."/>
            <person name="Blagodatski A."/>
            <person name="Kostovska D."/>
            <person name="Koter M."/>
            <person name="Plachy J."/>
            <person name="Carninci P."/>
            <person name="Hayashizaki Y."/>
            <person name="Buerstedde J.-M."/>
        </authorList>
    </citation>
    <scope>NUCLEOTIDE SEQUENCE [LARGE SCALE MRNA]</scope>
    <source>
        <strain>CB</strain>
        <tissue>Bursa of Fabricius</tissue>
    </source>
</reference>
<evidence type="ECO:0000250" key="1">
    <source>
        <dbReference type="UniProtKB" id="Q9NWT1"/>
    </source>
</evidence>
<evidence type="ECO:0000256" key="2">
    <source>
        <dbReference type="SAM" id="MobiDB-lite"/>
    </source>
</evidence>
<dbReference type="EMBL" id="AJ719986">
    <property type="protein sequence ID" value="CAG31645.1"/>
    <property type="molecule type" value="mRNA"/>
</dbReference>
<dbReference type="RefSeq" id="NP_001026170.1">
    <property type="nucleotide sequence ID" value="NM_001030999.1"/>
</dbReference>
<dbReference type="SMR" id="Q5ZKU8"/>
<dbReference type="FunCoup" id="Q5ZKU8">
    <property type="interactions" value="1606"/>
</dbReference>
<dbReference type="STRING" id="9031.ENSGALP00000020742"/>
<dbReference type="PaxDb" id="9031-ENSGALP00000020742"/>
<dbReference type="GeneID" id="420850"/>
<dbReference type="KEGG" id="gga:420850"/>
<dbReference type="CTD" id="55003"/>
<dbReference type="VEuPathDB" id="HostDB:geneid_420850"/>
<dbReference type="eggNOG" id="KOG0294">
    <property type="taxonomic scope" value="Eukaryota"/>
</dbReference>
<dbReference type="InParanoid" id="Q5ZKU8"/>
<dbReference type="OrthoDB" id="308449at2759"/>
<dbReference type="PhylomeDB" id="Q5ZKU8"/>
<dbReference type="PRO" id="PR:Q5ZKU8"/>
<dbReference type="Proteomes" id="UP000000539">
    <property type="component" value="Unassembled WGS sequence"/>
</dbReference>
<dbReference type="GO" id="GO:0005730">
    <property type="term" value="C:nucleolus"/>
    <property type="evidence" value="ECO:0000318"/>
    <property type="project" value="GO_Central"/>
</dbReference>
<dbReference type="GO" id="GO:0004860">
    <property type="term" value="F:protein kinase inhibitor activity"/>
    <property type="evidence" value="ECO:0000318"/>
    <property type="project" value="GO_Central"/>
</dbReference>
<dbReference type="GO" id="GO:0000463">
    <property type="term" value="P:maturation of LSU-rRNA from tricistronic rRNA transcript (SSU-rRNA, 5.8S rRNA, LSU-rRNA)"/>
    <property type="evidence" value="ECO:0000318"/>
    <property type="project" value="GO_Central"/>
</dbReference>
<dbReference type="GO" id="GO:0009968">
    <property type="term" value="P:negative regulation of signal transduction"/>
    <property type="evidence" value="ECO:0007669"/>
    <property type="project" value="UniProtKB-KW"/>
</dbReference>
<dbReference type="GO" id="GO:0042273">
    <property type="term" value="P:ribosomal large subunit biogenesis"/>
    <property type="evidence" value="ECO:0000250"/>
    <property type="project" value="UniProtKB"/>
</dbReference>
<dbReference type="FunFam" id="2.130.10.10:FF:000424">
    <property type="entry name" value="p21-activated protein kinase-interacting protein 1-like"/>
    <property type="match status" value="1"/>
</dbReference>
<dbReference type="FunFam" id="2.130.10.10:FF:002329">
    <property type="entry name" value="p21-activated protein kinase-interacting protein 1-like"/>
    <property type="match status" value="1"/>
</dbReference>
<dbReference type="Gene3D" id="2.130.10.10">
    <property type="entry name" value="YVTN repeat-like/Quinoprotein amine dehydrogenase"/>
    <property type="match status" value="2"/>
</dbReference>
<dbReference type="InterPro" id="IPR020472">
    <property type="entry name" value="G-protein_beta_WD-40_rep"/>
</dbReference>
<dbReference type="InterPro" id="IPR051959">
    <property type="entry name" value="PAK1-Kinase_Regulator"/>
</dbReference>
<dbReference type="InterPro" id="IPR015943">
    <property type="entry name" value="WD40/YVTN_repeat-like_dom_sf"/>
</dbReference>
<dbReference type="InterPro" id="IPR019775">
    <property type="entry name" value="WD40_repeat_CS"/>
</dbReference>
<dbReference type="InterPro" id="IPR036322">
    <property type="entry name" value="WD40_repeat_dom_sf"/>
</dbReference>
<dbReference type="InterPro" id="IPR001680">
    <property type="entry name" value="WD40_rpt"/>
</dbReference>
<dbReference type="PANTHER" id="PTHR44675:SF1">
    <property type="entry name" value="P21-ACTIVATED PROTEIN KINASE-INTERACTING PROTEIN 1"/>
    <property type="match status" value="1"/>
</dbReference>
<dbReference type="PANTHER" id="PTHR44675">
    <property type="entry name" value="PAK1 INTERACTING PROTEIN 1"/>
    <property type="match status" value="1"/>
</dbReference>
<dbReference type="Pfam" id="PF00400">
    <property type="entry name" value="WD40"/>
    <property type="match status" value="4"/>
</dbReference>
<dbReference type="PRINTS" id="PR00320">
    <property type="entry name" value="GPROTEINBRPT"/>
</dbReference>
<dbReference type="SMART" id="SM00320">
    <property type="entry name" value="WD40"/>
    <property type="match status" value="5"/>
</dbReference>
<dbReference type="SUPFAM" id="SSF50978">
    <property type="entry name" value="WD40 repeat-like"/>
    <property type="match status" value="1"/>
</dbReference>
<dbReference type="PROSITE" id="PS00678">
    <property type="entry name" value="WD_REPEATS_1"/>
    <property type="match status" value="3"/>
</dbReference>
<dbReference type="PROSITE" id="PS50082">
    <property type="entry name" value="WD_REPEATS_2"/>
    <property type="match status" value="4"/>
</dbReference>
<dbReference type="PROSITE" id="PS50294">
    <property type="entry name" value="WD_REPEATS_REGION"/>
    <property type="match status" value="2"/>
</dbReference>